<name>AMPPA_PYRAB</name>
<gene>
    <name type="primary">deoA</name>
    <name type="ordered locus">PYRAB05650</name>
    <name type="ORF">PAB1982</name>
</gene>
<protein>
    <recommendedName>
        <fullName evidence="1">AMP phosphorylase</fullName>
        <shortName evidence="1">AMPpase</shortName>
        <ecNumber evidence="1">2.4.2.57</ecNumber>
    </recommendedName>
    <alternativeName>
        <fullName evidence="1">Nucleoside monophosphate phosphorylase</fullName>
        <shortName evidence="1">NMP phosphorylase</shortName>
    </alternativeName>
</protein>
<reference key="1">
    <citation type="journal article" date="2003" name="Mol. Microbiol.">
        <title>An integrated analysis of the genome of the hyperthermophilic archaeon Pyrococcus abyssi.</title>
        <authorList>
            <person name="Cohen G.N."/>
            <person name="Barbe V."/>
            <person name="Flament D."/>
            <person name="Galperin M."/>
            <person name="Heilig R."/>
            <person name="Lecompte O."/>
            <person name="Poch O."/>
            <person name="Prieur D."/>
            <person name="Querellou J."/>
            <person name="Ripp R."/>
            <person name="Thierry J.-C."/>
            <person name="Van der Oost J."/>
            <person name="Weissenbach J."/>
            <person name="Zivanovic Y."/>
            <person name="Forterre P."/>
        </authorList>
    </citation>
    <scope>NUCLEOTIDE SEQUENCE [LARGE SCALE GENOMIC DNA]</scope>
    <source>
        <strain>GE5 / Orsay</strain>
    </source>
</reference>
<reference key="2">
    <citation type="journal article" date="2012" name="Curr. Microbiol.">
        <title>Re-annotation of two hyperthermophilic archaea Pyrococcus abyssi GE5 and Pyrococcus furiosus DSM 3638.</title>
        <authorList>
            <person name="Gao J."/>
            <person name="Wang J."/>
        </authorList>
    </citation>
    <scope>GENOME REANNOTATION</scope>
    <source>
        <strain>GE5 / Orsay</strain>
    </source>
</reference>
<comment type="function">
    <text evidence="1">Catalyzes the conversion of AMP and phosphate to adenine and ribose 1,5-bisphosphate (R15P). Exhibits phosphorylase activity toward CMP and UMP in addition to AMP. Functions in an archaeal AMP degradation pathway, together with R15P isomerase and RubisCO.</text>
</comment>
<comment type="catalytic activity">
    <reaction evidence="1">
        <text>AMP + phosphate = alpha-D-ribose 1,5-bisphosphate + adenine</text>
        <dbReference type="Rhea" id="RHEA:36975"/>
        <dbReference type="ChEBI" id="CHEBI:16708"/>
        <dbReference type="ChEBI" id="CHEBI:43474"/>
        <dbReference type="ChEBI" id="CHEBI:68688"/>
        <dbReference type="ChEBI" id="CHEBI:456215"/>
        <dbReference type="EC" id="2.4.2.57"/>
    </reaction>
</comment>
<comment type="catalytic activity">
    <reaction evidence="1">
        <text>CMP + phosphate = cytosine + alpha-D-ribose 1,5-bisphosphate</text>
        <dbReference type="Rhea" id="RHEA:36987"/>
        <dbReference type="ChEBI" id="CHEBI:16040"/>
        <dbReference type="ChEBI" id="CHEBI:43474"/>
        <dbReference type="ChEBI" id="CHEBI:60377"/>
        <dbReference type="ChEBI" id="CHEBI:68688"/>
        <dbReference type="EC" id="2.4.2.57"/>
    </reaction>
</comment>
<comment type="catalytic activity">
    <reaction evidence="1">
        <text>UMP + phosphate = alpha-D-ribose 1,5-bisphosphate + uracil</text>
        <dbReference type="Rhea" id="RHEA:36991"/>
        <dbReference type="ChEBI" id="CHEBI:17568"/>
        <dbReference type="ChEBI" id="CHEBI:43474"/>
        <dbReference type="ChEBI" id="CHEBI:57865"/>
        <dbReference type="ChEBI" id="CHEBI:68688"/>
        <dbReference type="EC" id="2.4.2.57"/>
    </reaction>
</comment>
<comment type="similarity">
    <text evidence="1">Belongs to the thymidine/pyrimidine-nucleoside phosphorylase family. Type 2 subfamily.</text>
</comment>
<comment type="sequence caution" evidence="2">
    <conflict type="erroneous initiation">
        <sequence resource="EMBL-CDS" id="CAB49487"/>
    </conflict>
</comment>
<proteinExistence type="inferred from homology"/>
<accession>Q9V163</accession>
<accession>G8ZJ29</accession>
<feature type="chain" id="PRO_0000059090" description="AMP phosphorylase">
    <location>
        <begin position="1"/>
        <end position="503"/>
    </location>
</feature>
<feature type="active site" description="Proton donor" evidence="1">
    <location>
        <position position="256"/>
    </location>
</feature>
<feature type="binding site" evidence="1">
    <location>
        <position position="168"/>
    </location>
    <ligand>
        <name>AMP</name>
        <dbReference type="ChEBI" id="CHEBI:456215"/>
    </ligand>
</feature>
<feature type="binding site" evidence="1">
    <location>
        <begin position="194"/>
        <end position="199"/>
    </location>
    <ligand>
        <name>AMP</name>
        <dbReference type="ChEBI" id="CHEBI:456215"/>
    </ligand>
</feature>
<feature type="binding site" evidence="1">
    <location>
        <position position="203"/>
    </location>
    <ligand>
        <name>AMP</name>
        <dbReference type="ChEBI" id="CHEBI:456215"/>
    </ligand>
</feature>
<feature type="binding site" evidence="1">
    <location>
        <position position="264"/>
    </location>
    <ligand>
        <name>AMP</name>
        <dbReference type="ChEBI" id="CHEBI:456215"/>
    </ligand>
</feature>
<feature type="binding site" evidence="1">
    <location>
        <position position="288"/>
    </location>
    <ligand>
        <name>AMP</name>
        <dbReference type="ChEBI" id="CHEBI:456215"/>
    </ligand>
</feature>
<keyword id="KW-0328">Glycosyltransferase</keyword>
<keyword id="KW-0808">Transferase</keyword>
<dbReference type="EC" id="2.4.2.57" evidence="1"/>
<dbReference type="EMBL" id="AJ248284">
    <property type="protein sequence ID" value="CAB49487.1"/>
    <property type="status" value="ALT_INIT"/>
    <property type="molecule type" value="Genomic_DNA"/>
</dbReference>
<dbReference type="EMBL" id="HE613800">
    <property type="protein sequence ID" value="CCE69956.1"/>
    <property type="molecule type" value="Genomic_DNA"/>
</dbReference>
<dbReference type="PIR" id="H75175">
    <property type="entry name" value="H75175"/>
</dbReference>
<dbReference type="RefSeq" id="WP_048146577.1">
    <property type="nucleotide sequence ID" value="NC_000868.1"/>
</dbReference>
<dbReference type="SMR" id="Q9V163"/>
<dbReference type="STRING" id="272844.PAB1982"/>
<dbReference type="KEGG" id="pab:PAB1982"/>
<dbReference type="PATRIC" id="fig|272844.11.peg.602"/>
<dbReference type="eggNOG" id="arCOG02013">
    <property type="taxonomic scope" value="Archaea"/>
</dbReference>
<dbReference type="HOGENOM" id="CLU_025040_6_0_2"/>
<dbReference type="OrthoDB" id="9827at2157"/>
<dbReference type="PhylomeDB" id="Q9V163"/>
<dbReference type="Proteomes" id="UP000000810">
    <property type="component" value="Chromosome"/>
</dbReference>
<dbReference type="Proteomes" id="UP000009139">
    <property type="component" value="Chromosome"/>
</dbReference>
<dbReference type="GO" id="GO:0005829">
    <property type="term" value="C:cytosol"/>
    <property type="evidence" value="ECO:0007669"/>
    <property type="project" value="TreeGrafter"/>
</dbReference>
<dbReference type="GO" id="GO:0004645">
    <property type="term" value="F:1,4-alpha-oligoglucan phosphorylase activity"/>
    <property type="evidence" value="ECO:0007669"/>
    <property type="project" value="InterPro"/>
</dbReference>
<dbReference type="GO" id="GO:0016208">
    <property type="term" value="F:AMP binding"/>
    <property type="evidence" value="ECO:0007669"/>
    <property type="project" value="UniProtKB-UniRule"/>
</dbReference>
<dbReference type="GO" id="GO:0016763">
    <property type="term" value="F:pentosyltransferase activity"/>
    <property type="evidence" value="ECO:0007669"/>
    <property type="project" value="UniProtKB-UniRule"/>
</dbReference>
<dbReference type="GO" id="GO:0006196">
    <property type="term" value="P:AMP catabolic process"/>
    <property type="evidence" value="ECO:0007669"/>
    <property type="project" value="UniProtKB-UniRule"/>
</dbReference>
<dbReference type="GO" id="GO:0046125">
    <property type="term" value="P:pyrimidine deoxyribonucleoside metabolic process"/>
    <property type="evidence" value="ECO:0007669"/>
    <property type="project" value="InterPro"/>
</dbReference>
<dbReference type="GO" id="GO:0006206">
    <property type="term" value="P:pyrimidine nucleobase metabolic process"/>
    <property type="evidence" value="ECO:0007669"/>
    <property type="project" value="InterPro"/>
</dbReference>
<dbReference type="FunFam" id="3.90.1170.30:FF:000004">
    <property type="entry name" value="AMP phosphorylase"/>
    <property type="match status" value="1"/>
</dbReference>
<dbReference type="Gene3D" id="1.20.970.50">
    <property type="match status" value="1"/>
</dbReference>
<dbReference type="Gene3D" id="2.40.40.20">
    <property type="match status" value="1"/>
</dbReference>
<dbReference type="Gene3D" id="3.40.1030.10">
    <property type="entry name" value="Nucleoside phosphorylase/phosphoribosyltransferase catalytic domain"/>
    <property type="match status" value="1"/>
</dbReference>
<dbReference type="Gene3D" id="3.90.1170.30">
    <property type="entry name" value="Pyrimidine nucleoside phosphorylase-like, C-terminal domain"/>
    <property type="match status" value="1"/>
</dbReference>
<dbReference type="HAMAP" id="MF_02132">
    <property type="entry name" value="AMP_phosphorylase"/>
    <property type="match status" value="1"/>
</dbReference>
<dbReference type="InterPro" id="IPR017713">
    <property type="entry name" value="AMP_phosphorylase"/>
</dbReference>
<dbReference type="InterPro" id="IPR009010">
    <property type="entry name" value="Asp_de-COase-like_dom_sf"/>
</dbReference>
<dbReference type="InterPro" id="IPR000312">
    <property type="entry name" value="Glycosyl_Trfase_fam3"/>
</dbReference>
<dbReference type="InterPro" id="IPR017459">
    <property type="entry name" value="Glycosyl_Trfase_fam3_N_dom"/>
</dbReference>
<dbReference type="InterPro" id="IPR036320">
    <property type="entry name" value="Glycosyl_Trfase_fam3_N_dom_sf"/>
</dbReference>
<dbReference type="InterPro" id="IPR035902">
    <property type="entry name" value="Nuc_phospho_transferase"/>
</dbReference>
<dbReference type="InterPro" id="IPR036566">
    <property type="entry name" value="PYNP-like_C_sf"/>
</dbReference>
<dbReference type="InterPro" id="IPR013102">
    <property type="entry name" value="PYNP_C"/>
</dbReference>
<dbReference type="InterPro" id="IPR017872">
    <property type="entry name" value="Pyrmidine_PPase_CS"/>
</dbReference>
<dbReference type="InterPro" id="IPR013466">
    <property type="entry name" value="Thymidine/AMP_Pase"/>
</dbReference>
<dbReference type="InterPro" id="IPR000053">
    <property type="entry name" value="Thymidine/pyrmidine_PPase"/>
</dbReference>
<dbReference type="NCBIfam" id="TIGR03327">
    <property type="entry name" value="AMP_phos"/>
    <property type="match status" value="1"/>
</dbReference>
<dbReference type="NCBIfam" id="TIGR02645">
    <property type="entry name" value="ARCH_P_rylase"/>
    <property type="match status" value="1"/>
</dbReference>
<dbReference type="NCBIfam" id="NF003338">
    <property type="entry name" value="PRK04350.1"/>
    <property type="match status" value="1"/>
</dbReference>
<dbReference type="PANTHER" id="PTHR10515">
    <property type="entry name" value="THYMIDINE PHOSPHORYLASE"/>
    <property type="match status" value="1"/>
</dbReference>
<dbReference type="PANTHER" id="PTHR10515:SF0">
    <property type="entry name" value="THYMIDINE PHOSPHORYLASE"/>
    <property type="match status" value="1"/>
</dbReference>
<dbReference type="Pfam" id="PF02885">
    <property type="entry name" value="Glycos_trans_3N"/>
    <property type="match status" value="1"/>
</dbReference>
<dbReference type="Pfam" id="PF00591">
    <property type="entry name" value="Glycos_transf_3"/>
    <property type="match status" value="1"/>
</dbReference>
<dbReference type="Pfam" id="PF07831">
    <property type="entry name" value="PYNP_C"/>
    <property type="match status" value="1"/>
</dbReference>
<dbReference type="PIRSF" id="PIRSF000478">
    <property type="entry name" value="TP_PyNP"/>
    <property type="match status" value="1"/>
</dbReference>
<dbReference type="SMART" id="SM00941">
    <property type="entry name" value="PYNP_C"/>
    <property type="match status" value="1"/>
</dbReference>
<dbReference type="SUPFAM" id="SSF50692">
    <property type="entry name" value="ADC-like"/>
    <property type="match status" value="1"/>
</dbReference>
<dbReference type="SUPFAM" id="SSF52418">
    <property type="entry name" value="Nucleoside phosphorylase/phosphoribosyltransferase catalytic domain"/>
    <property type="match status" value="1"/>
</dbReference>
<dbReference type="SUPFAM" id="SSF47648">
    <property type="entry name" value="Nucleoside phosphorylase/phosphoribosyltransferase N-terminal domain"/>
    <property type="match status" value="1"/>
</dbReference>
<dbReference type="SUPFAM" id="SSF54680">
    <property type="entry name" value="Pyrimidine nucleoside phosphorylase C-terminal domain"/>
    <property type="match status" value="1"/>
</dbReference>
<dbReference type="PROSITE" id="PS00647">
    <property type="entry name" value="THYMID_PHOSPHORYLASE"/>
    <property type="match status" value="1"/>
</dbReference>
<organism>
    <name type="scientific">Pyrococcus abyssi (strain GE5 / Orsay)</name>
    <dbReference type="NCBI Taxonomy" id="272844"/>
    <lineage>
        <taxon>Archaea</taxon>
        <taxon>Methanobacteriati</taxon>
        <taxon>Methanobacteriota</taxon>
        <taxon>Thermococci</taxon>
        <taxon>Thermococcales</taxon>
        <taxon>Thermococcaceae</taxon>
        <taxon>Pyrococcus</taxon>
    </lineage>
</organism>
<sequence length="503" mass="54198">MRAKVRILNIRSGHFDVFINPKDAQEWKLHPNDLVKIESGKRSIYGSVVIGDFVESGEVGLSLDILDAYQFSEGELVSITPSETPESVRYIKKKMRGEKLRKVEIETIVRDIVDRKLRNTEISALVTAIEVNGLDMDEIAALTIAMAETGDMLDIDRKPIMDVHSIGGVPGNKTNIIVVPIVAAAGLTIPKTSSRAITSAAGTADVVEVFTNVTLSLDEIKRIVEKIGACLVWGGALNLAPADDLTIHVERRLSLDPRGLMLASIMSKKYAIGSQYILIDIPTGKGAKVETMEEARSLAKDFIELGKKLGQYVEVAITYGGQPIGYTVGPALEAKEALETLMTGKGPGSLVEKALGLAGILLEMGGVAPRGMGKKVAREILESGKAYEKIKEIIEEQGGDPNIKPEDIPIGDKTYTIHAQTSGYVTGIDNKAITAIAREAGAPEDKGAGVKLHVKVGEKVKEGDPLFTIHAESESRLDKAIILARRLEPIKIEGMVLQVLGNL</sequence>
<evidence type="ECO:0000255" key="1">
    <source>
        <dbReference type="HAMAP-Rule" id="MF_02132"/>
    </source>
</evidence>
<evidence type="ECO:0000305" key="2"/>